<name>SYE_SALDC</name>
<gene>
    <name evidence="1" type="primary">gltX</name>
    <name type="ordered locus">SeD_A2779</name>
</gene>
<organism>
    <name type="scientific">Salmonella dublin (strain CT_02021853)</name>
    <dbReference type="NCBI Taxonomy" id="439851"/>
    <lineage>
        <taxon>Bacteria</taxon>
        <taxon>Pseudomonadati</taxon>
        <taxon>Pseudomonadota</taxon>
        <taxon>Gammaproteobacteria</taxon>
        <taxon>Enterobacterales</taxon>
        <taxon>Enterobacteriaceae</taxon>
        <taxon>Salmonella</taxon>
    </lineage>
</organism>
<accession>B5FQB0</accession>
<protein>
    <recommendedName>
        <fullName evidence="1">Glutamate--tRNA ligase</fullName>
        <ecNumber evidence="1">6.1.1.17</ecNumber>
    </recommendedName>
    <alternativeName>
        <fullName evidence="1">Glutamyl-tRNA synthetase</fullName>
        <shortName evidence="1">GluRS</shortName>
    </alternativeName>
</protein>
<reference key="1">
    <citation type="journal article" date="2011" name="J. Bacteriol.">
        <title>Comparative genomics of 28 Salmonella enterica isolates: evidence for CRISPR-mediated adaptive sublineage evolution.</title>
        <authorList>
            <person name="Fricke W.F."/>
            <person name="Mammel M.K."/>
            <person name="McDermott P.F."/>
            <person name="Tartera C."/>
            <person name="White D.G."/>
            <person name="Leclerc J.E."/>
            <person name="Ravel J."/>
            <person name="Cebula T.A."/>
        </authorList>
    </citation>
    <scope>NUCLEOTIDE SEQUENCE [LARGE SCALE GENOMIC DNA]</scope>
    <source>
        <strain>CT_02021853</strain>
    </source>
</reference>
<comment type="function">
    <text evidence="1">Catalyzes the attachment of glutamate to tRNA(Glu) in a two-step reaction: glutamate is first activated by ATP to form Glu-AMP and then transferred to the acceptor end of tRNA(Glu).</text>
</comment>
<comment type="catalytic activity">
    <reaction evidence="1">
        <text>tRNA(Glu) + L-glutamate + ATP = L-glutamyl-tRNA(Glu) + AMP + diphosphate</text>
        <dbReference type="Rhea" id="RHEA:23540"/>
        <dbReference type="Rhea" id="RHEA-COMP:9663"/>
        <dbReference type="Rhea" id="RHEA-COMP:9680"/>
        <dbReference type="ChEBI" id="CHEBI:29985"/>
        <dbReference type="ChEBI" id="CHEBI:30616"/>
        <dbReference type="ChEBI" id="CHEBI:33019"/>
        <dbReference type="ChEBI" id="CHEBI:78442"/>
        <dbReference type="ChEBI" id="CHEBI:78520"/>
        <dbReference type="ChEBI" id="CHEBI:456215"/>
        <dbReference type="EC" id="6.1.1.17"/>
    </reaction>
</comment>
<comment type="cofactor">
    <cofactor evidence="1">
        <name>Zn(2+)</name>
        <dbReference type="ChEBI" id="CHEBI:29105"/>
    </cofactor>
    <text evidence="1">Binds 1 zinc ion per subunit.</text>
</comment>
<comment type="subunit">
    <text evidence="1">Monomer.</text>
</comment>
<comment type="subcellular location">
    <subcellularLocation>
        <location evidence="1">Cytoplasm</location>
    </subcellularLocation>
</comment>
<comment type="similarity">
    <text evidence="1">Belongs to the class-I aminoacyl-tRNA synthetase family. Glutamate--tRNA ligase type 1 subfamily.</text>
</comment>
<sequence>MKIKTRFAPSPTGYLHVGGARTALYSWLFARHHGGEFVLRIEDTDLERSTPEAIEAIMDGMNWLNLEWDEGPYFQTKRFERYNAVIDEMLEAGTAYKCYCSKERLEQLREEQMAKGEKPRYDGRCRHSYEHHADDEPCVVRFANPQDGSVIFDDQIRGPIEFSNQELDDLIIRRTDGSPTYNFCVVVDDWDMEITHVIRGEDHINNTPRQINILKALNAPVPMYAHVSMINGDDGKKLSKRHGAVSVMQYRDDGYLPEALLNYLVRLGWSSGDQEIFTREEMIKLFSLGAVSKSASAFNTDKLLWLNHHYINTLAPEYVATHLQWHIEQENIDTRNGPQLAELVKLLGERCKTLKEMAQSCRYFYEDFSEFDADAAKKHLRPVARQPLEVVRDKLSAITDWSAENVHHAIQATADELEVGMGKVGMPLRVAVTGAGQSPALDVTVHAIGKTRSIERINKALGFIAERESQQ</sequence>
<evidence type="ECO:0000255" key="1">
    <source>
        <dbReference type="HAMAP-Rule" id="MF_00022"/>
    </source>
</evidence>
<proteinExistence type="inferred from homology"/>
<dbReference type="EC" id="6.1.1.17" evidence="1"/>
<dbReference type="EMBL" id="CP001144">
    <property type="protein sequence ID" value="ACH75100.1"/>
    <property type="molecule type" value="Genomic_DNA"/>
</dbReference>
<dbReference type="RefSeq" id="WP_000695630.1">
    <property type="nucleotide sequence ID" value="NC_011205.1"/>
</dbReference>
<dbReference type="SMR" id="B5FQB0"/>
<dbReference type="KEGG" id="sed:SeD_A2779"/>
<dbReference type="HOGENOM" id="CLU_015768_6_0_6"/>
<dbReference type="Proteomes" id="UP000008322">
    <property type="component" value="Chromosome"/>
</dbReference>
<dbReference type="GO" id="GO:0005829">
    <property type="term" value="C:cytosol"/>
    <property type="evidence" value="ECO:0007669"/>
    <property type="project" value="TreeGrafter"/>
</dbReference>
<dbReference type="GO" id="GO:0005524">
    <property type="term" value="F:ATP binding"/>
    <property type="evidence" value="ECO:0007669"/>
    <property type="project" value="UniProtKB-UniRule"/>
</dbReference>
<dbReference type="GO" id="GO:0004818">
    <property type="term" value="F:glutamate-tRNA ligase activity"/>
    <property type="evidence" value="ECO:0007669"/>
    <property type="project" value="UniProtKB-UniRule"/>
</dbReference>
<dbReference type="GO" id="GO:0000049">
    <property type="term" value="F:tRNA binding"/>
    <property type="evidence" value="ECO:0007669"/>
    <property type="project" value="InterPro"/>
</dbReference>
<dbReference type="GO" id="GO:0008270">
    <property type="term" value="F:zinc ion binding"/>
    <property type="evidence" value="ECO:0007669"/>
    <property type="project" value="UniProtKB-UniRule"/>
</dbReference>
<dbReference type="GO" id="GO:0006424">
    <property type="term" value="P:glutamyl-tRNA aminoacylation"/>
    <property type="evidence" value="ECO:0007669"/>
    <property type="project" value="UniProtKB-UniRule"/>
</dbReference>
<dbReference type="CDD" id="cd00808">
    <property type="entry name" value="GluRS_core"/>
    <property type="match status" value="1"/>
</dbReference>
<dbReference type="FunFam" id="1.10.10.350:FF:000001">
    <property type="entry name" value="Glutamate--tRNA ligase"/>
    <property type="match status" value="1"/>
</dbReference>
<dbReference type="FunFam" id="3.40.50.620:FF:000007">
    <property type="entry name" value="Glutamate--tRNA ligase"/>
    <property type="match status" value="1"/>
</dbReference>
<dbReference type="Gene3D" id="1.10.10.350">
    <property type="match status" value="1"/>
</dbReference>
<dbReference type="Gene3D" id="3.40.50.620">
    <property type="entry name" value="HUPs"/>
    <property type="match status" value="1"/>
</dbReference>
<dbReference type="HAMAP" id="MF_00022">
    <property type="entry name" value="Glu_tRNA_synth_type1"/>
    <property type="match status" value="1"/>
</dbReference>
<dbReference type="InterPro" id="IPR045462">
    <property type="entry name" value="aa-tRNA-synth_I_cd-bd"/>
</dbReference>
<dbReference type="InterPro" id="IPR020751">
    <property type="entry name" value="aa-tRNA-synth_I_codon-bd_sub2"/>
</dbReference>
<dbReference type="InterPro" id="IPR001412">
    <property type="entry name" value="aa-tRNA-synth_I_CS"/>
</dbReference>
<dbReference type="InterPro" id="IPR008925">
    <property type="entry name" value="aa_tRNA-synth_I_cd-bd_sf"/>
</dbReference>
<dbReference type="InterPro" id="IPR004527">
    <property type="entry name" value="Glu-tRNA-ligase_bac/mito"/>
</dbReference>
<dbReference type="InterPro" id="IPR000924">
    <property type="entry name" value="Glu/Gln-tRNA-synth"/>
</dbReference>
<dbReference type="InterPro" id="IPR020058">
    <property type="entry name" value="Glu/Gln-tRNA-synth_Ib_cat-dom"/>
</dbReference>
<dbReference type="InterPro" id="IPR049940">
    <property type="entry name" value="GluQ/Sye"/>
</dbReference>
<dbReference type="InterPro" id="IPR033910">
    <property type="entry name" value="GluRS_core"/>
</dbReference>
<dbReference type="InterPro" id="IPR014729">
    <property type="entry name" value="Rossmann-like_a/b/a_fold"/>
</dbReference>
<dbReference type="NCBIfam" id="TIGR00464">
    <property type="entry name" value="gltX_bact"/>
    <property type="match status" value="1"/>
</dbReference>
<dbReference type="PANTHER" id="PTHR43311">
    <property type="entry name" value="GLUTAMATE--TRNA LIGASE"/>
    <property type="match status" value="1"/>
</dbReference>
<dbReference type="PANTHER" id="PTHR43311:SF2">
    <property type="entry name" value="GLUTAMATE--TRNA LIGASE, MITOCHONDRIAL-RELATED"/>
    <property type="match status" value="1"/>
</dbReference>
<dbReference type="Pfam" id="PF19269">
    <property type="entry name" value="Anticodon_2"/>
    <property type="match status" value="1"/>
</dbReference>
<dbReference type="Pfam" id="PF00749">
    <property type="entry name" value="tRNA-synt_1c"/>
    <property type="match status" value="1"/>
</dbReference>
<dbReference type="PRINTS" id="PR00987">
    <property type="entry name" value="TRNASYNTHGLU"/>
</dbReference>
<dbReference type="SUPFAM" id="SSF48163">
    <property type="entry name" value="An anticodon-binding domain of class I aminoacyl-tRNA synthetases"/>
    <property type="match status" value="1"/>
</dbReference>
<dbReference type="SUPFAM" id="SSF52374">
    <property type="entry name" value="Nucleotidylyl transferase"/>
    <property type="match status" value="1"/>
</dbReference>
<dbReference type="PROSITE" id="PS00178">
    <property type="entry name" value="AA_TRNA_LIGASE_I"/>
    <property type="match status" value="1"/>
</dbReference>
<feature type="chain" id="PRO_1000090101" description="Glutamate--tRNA ligase">
    <location>
        <begin position="1"/>
        <end position="471"/>
    </location>
</feature>
<feature type="short sequence motif" description="'HIGH' region" evidence="1">
    <location>
        <begin position="9"/>
        <end position="19"/>
    </location>
</feature>
<feature type="short sequence motif" description="'KMSKS' region" evidence="1">
    <location>
        <begin position="237"/>
        <end position="241"/>
    </location>
</feature>
<feature type="binding site" evidence="1">
    <location>
        <position position="98"/>
    </location>
    <ligand>
        <name>Zn(2+)</name>
        <dbReference type="ChEBI" id="CHEBI:29105"/>
    </ligand>
</feature>
<feature type="binding site" evidence="1">
    <location>
        <position position="100"/>
    </location>
    <ligand>
        <name>Zn(2+)</name>
        <dbReference type="ChEBI" id="CHEBI:29105"/>
    </ligand>
</feature>
<feature type="binding site" evidence="1">
    <location>
        <position position="125"/>
    </location>
    <ligand>
        <name>Zn(2+)</name>
        <dbReference type="ChEBI" id="CHEBI:29105"/>
    </ligand>
</feature>
<feature type="binding site" evidence="1">
    <location>
        <position position="127"/>
    </location>
    <ligand>
        <name>Zn(2+)</name>
        <dbReference type="ChEBI" id="CHEBI:29105"/>
    </ligand>
</feature>
<feature type="binding site" evidence="1">
    <location>
        <position position="240"/>
    </location>
    <ligand>
        <name>ATP</name>
        <dbReference type="ChEBI" id="CHEBI:30616"/>
    </ligand>
</feature>
<keyword id="KW-0030">Aminoacyl-tRNA synthetase</keyword>
<keyword id="KW-0067">ATP-binding</keyword>
<keyword id="KW-0963">Cytoplasm</keyword>
<keyword id="KW-0436">Ligase</keyword>
<keyword id="KW-0479">Metal-binding</keyword>
<keyword id="KW-0547">Nucleotide-binding</keyword>
<keyword id="KW-0648">Protein biosynthesis</keyword>
<keyword id="KW-0862">Zinc</keyword>